<proteinExistence type="inferred from homology"/>
<reference key="1">
    <citation type="journal article" date="2004" name="Proc. Natl. Acad. Sci. U.S.A.">
        <title>Complete genomes of two clinical Staphylococcus aureus strains: evidence for the rapid evolution of virulence and drug resistance.</title>
        <authorList>
            <person name="Holden M.T.G."/>
            <person name="Feil E.J."/>
            <person name="Lindsay J.A."/>
            <person name="Peacock S.J."/>
            <person name="Day N.P.J."/>
            <person name="Enright M.C."/>
            <person name="Foster T.J."/>
            <person name="Moore C.E."/>
            <person name="Hurst L."/>
            <person name="Atkin R."/>
            <person name="Barron A."/>
            <person name="Bason N."/>
            <person name="Bentley S.D."/>
            <person name="Chillingworth C."/>
            <person name="Chillingworth T."/>
            <person name="Churcher C."/>
            <person name="Clark L."/>
            <person name="Corton C."/>
            <person name="Cronin A."/>
            <person name="Doggett J."/>
            <person name="Dowd L."/>
            <person name="Feltwell T."/>
            <person name="Hance Z."/>
            <person name="Harris B."/>
            <person name="Hauser H."/>
            <person name="Holroyd S."/>
            <person name="Jagels K."/>
            <person name="James K.D."/>
            <person name="Lennard N."/>
            <person name="Line A."/>
            <person name="Mayes R."/>
            <person name="Moule S."/>
            <person name="Mungall K."/>
            <person name="Ormond D."/>
            <person name="Quail M.A."/>
            <person name="Rabbinowitsch E."/>
            <person name="Rutherford K.M."/>
            <person name="Sanders M."/>
            <person name="Sharp S."/>
            <person name="Simmonds M."/>
            <person name="Stevens K."/>
            <person name="Whitehead S."/>
            <person name="Barrell B.G."/>
            <person name="Spratt B.G."/>
            <person name="Parkhill J."/>
        </authorList>
    </citation>
    <scope>NUCLEOTIDE SEQUENCE [LARGE SCALE GENOMIC DNA]</scope>
    <source>
        <strain>MSSA476</strain>
    </source>
</reference>
<feature type="chain" id="PRO_0000223330" description="NAD-specific glutamate dehydrogenase">
    <location>
        <begin position="1"/>
        <end position="414"/>
    </location>
</feature>
<feature type="active site" description="Proton donor" evidence="2">
    <location>
        <position position="106"/>
    </location>
</feature>
<feature type="binding site" evidence="1">
    <location>
        <position position="70"/>
    </location>
    <ligand>
        <name>substrate</name>
    </ligand>
</feature>
<feature type="binding site" evidence="1">
    <location>
        <position position="94"/>
    </location>
    <ligand>
        <name>substrate</name>
    </ligand>
</feature>
<feature type="binding site" evidence="1">
    <location>
        <position position="190"/>
    </location>
    <ligand>
        <name>NAD(+)</name>
        <dbReference type="ChEBI" id="CHEBI:57540"/>
    </ligand>
</feature>
<feature type="binding site" evidence="1">
    <location>
        <position position="221"/>
    </location>
    <ligand>
        <name>NAD(+)</name>
        <dbReference type="ChEBI" id="CHEBI:57540"/>
    </ligand>
</feature>
<feature type="binding site" evidence="1">
    <location>
        <position position="348"/>
    </location>
    <ligand>
        <name>substrate</name>
    </ligand>
</feature>
<feature type="site" description="Important for catalysis" evidence="1">
    <location>
        <position position="146"/>
    </location>
</feature>
<sequence>MTENNNLVTSTQGIIKEALHKLGFDEGMYDLIKEPLRMLQVRIPVRMDDGTVKTFTGYRAQHNDAVGPTKGGVRFHPDVDEEEVKALSMWMTLKCGIVNLPYGGGKGGIVCDPRQMSIHEVERLSRGYVRAISQFVGPNKDIPAPDVFTNSQIMAWMMDEYSALDKFNSPGFITGKPIVLGGSHGRDRSTALGVVIAIEQAAKRRNMQIEGAKVVIQGFGNAGSFLAKFLYDLGAKIVGISDAYGALHDPNGLDIDYLLDRRDSFGTVTNLFEETISNKELFELDCDILVPAAISNQITEDNAHDIKASIVVEAANGPTTPEATRILTERGILLVPDVLASAGGVTVSYFEWVQNNQGYYWSEEEVNEKLREKLEAAFDTIYELSQNRKIDMRLAAYIIGIKRTAEAARYRGWA</sequence>
<dbReference type="EC" id="1.4.1.2"/>
<dbReference type="EMBL" id="BX571857">
    <property type="protein sequence ID" value="CAG42603.1"/>
    <property type="molecule type" value="Genomic_DNA"/>
</dbReference>
<dbReference type="RefSeq" id="WP_000138487.1">
    <property type="nucleotide sequence ID" value="NC_002953.3"/>
</dbReference>
<dbReference type="SMR" id="Q6GAW8"/>
<dbReference type="KEGG" id="sas:SAS0828"/>
<dbReference type="HOGENOM" id="CLU_025763_1_2_9"/>
<dbReference type="GO" id="GO:0004352">
    <property type="term" value="F:glutamate dehydrogenase (NAD+) activity"/>
    <property type="evidence" value="ECO:0000250"/>
    <property type="project" value="UniProtKB"/>
</dbReference>
<dbReference type="GO" id="GO:0006520">
    <property type="term" value="P:amino acid metabolic process"/>
    <property type="evidence" value="ECO:0000250"/>
    <property type="project" value="UniProtKB"/>
</dbReference>
<dbReference type="GO" id="GO:0006538">
    <property type="term" value="P:glutamate catabolic process"/>
    <property type="evidence" value="ECO:0007669"/>
    <property type="project" value="TreeGrafter"/>
</dbReference>
<dbReference type="CDD" id="cd01076">
    <property type="entry name" value="NAD_bind_1_Glu_DH"/>
    <property type="match status" value="1"/>
</dbReference>
<dbReference type="FunFam" id="3.40.50.10860:FF:000008">
    <property type="entry name" value="Glutamate dehydrogenase"/>
    <property type="match status" value="1"/>
</dbReference>
<dbReference type="FunFam" id="3.40.50.720:FF:000242">
    <property type="entry name" value="Glutamate dehydrogenase"/>
    <property type="match status" value="1"/>
</dbReference>
<dbReference type="Gene3D" id="1.10.8.1210">
    <property type="match status" value="2"/>
</dbReference>
<dbReference type="Gene3D" id="3.40.50.10860">
    <property type="entry name" value="Leucine Dehydrogenase, chain A, domain 1"/>
    <property type="match status" value="1"/>
</dbReference>
<dbReference type="Gene3D" id="3.40.50.720">
    <property type="entry name" value="NAD(P)-binding Rossmann-like Domain"/>
    <property type="match status" value="1"/>
</dbReference>
<dbReference type="InterPro" id="IPR046346">
    <property type="entry name" value="Aminoacid_DH-like_N_sf"/>
</dbReference>
<dbReference type="InterPro" id="IPR006095">
    <property type="entry name" value="Glu/Leu/Phe/Val/Trp_DH"/>
</dbReference>
<dbReference type="InterPro" id="IPR006096">
    <property type="entry name" value="Glu/Leu/Phe/Val/Trp_DH_C"/>
</dbReference>
<dbReference type="InterPro" id="IPR006097">
    <property type="entry name" value="Glu/Leu/Phe/Val/Trp_DH_dimer"/>
</dbReference>
<dbReference type="InterPro" id="IPR033524">
    <property type="entry name" value="Glu/Leu/Phe/Val_DH_AS"/>
</dbReference>
<dbReference type="InterPro" id="IPR014362">
    <property type="entry name" value="Glu_DH"/>
</dbReference>
<dbReference type="InterPro" id="IPR036291">
    <property type="entry name" value="NAD(P)-bd_dom_sf"/>
</dbReference>
<dbReference type="InterPro" id="IPR033922">
    <property type="entry name" value="NAD_bind_Glu_DH"/>
</dbReference>
<dbReference type="PANTHER" id="PTHR11606">
    <property type="entry name" value="GLUTAMATE DEHYDROGENASE"/>
    <property type="match status" value="1"/>
</dbReference>
<dbReference type="PANTHER" id="PTHR11606:SF13">
    <property type="entry name" value="GLUTAMATE DEHYDROGENASE 1, MITOCHONDRIAL"/>
    <property type="match status" value="1"/>
</dbReference>
<dbReference type="Pfam" id="PF00208">
    <property type="entry name" value="ELFV_dehydrog"/>
    <property type="match status" value="1"/>
</dbReference>
<dbReference type="Pfam" id="PF02812">
    <property type="entry name" value="ELFV_dehydrog_N"/>
    <property type="match status" value="1"/>
</dbReference>
<dbReference type="PIRSF" id="PIRSF000185">
    <property type="entry name" value="Glu_DH"/>
    <property type="match status" value="1"/>
</dbReference>
<dbReference type="PRINTS" id="PR00082">
    <property type="entry name" value="GLFDHDRGNASE"/>
</dbReference>
<dbReference type="SMART" id="SM00839">
    <property type="entry name" value="ELFV_dehydrog"/>
    <property type="match status" value="1"/>
</dbReference>
<dbReference type="SUPFAM" id="SSF53223">
    <property type="entry name" value="Aminoacid dehydrogenase-like, N-terminal domain"/>
    <property type="match status" value="1"/>
</dbReference>
<dbReference type="SUPFAM" id="SSF51735">
    <property type="entry name" value="NAD(P)-binding Rossmann-fold domains"/>
    <property type="match status" value="1"/>
</dbReference>
<dbReference type="PROSITE" id="PS00074">
    <property type="entry name" value="GLFV_DEHYDROGENASE"/>
    <property type="match status" value="1"/>
</dbReference>
<keyword id="KW-0520">NAD</keyword>
<keyword id="KW-0560">Oxidoreductase</keyword>
<name>DHE2_STAAS</name>
<gene>
    <name type="primary">gluD</name>
    <name type="ordered locus">SAS0828</name>
</gene>
<protein>
    <recommendedName>
        <fullName>NAD-specific glutamate dehydrogenase</fullName>
        <shortName>NAD-GDH</shortName>
        <ecNumber>1.4.1.2</ecNumber>
    </recommendedName>
</protein>
<organism>
    <name type="scientific">Staphylococcus aureus (strain MSSA476)</name>
    <dbReference type="NCBI Taxonomy" id="282459"/>
    <lineage>
        <taxon>Bacteria</taxon>
        <taxon>Bacillati</taxon>
        <taxon>Bacillota</taxon>
        <taxon>Bacilli</taxon>
        <taxon>Bacillales</taxon>
        <taxon>Staphylococcaceae</taxon>
        <taxon>Staphylococcus</taxon>
    </lineage>
</organism>
<comment type="catalytic activity">
    <reaction>
        <text>L-glutamate + NAD(+) + H2O = 2-oxoglutarate + NH4(+) + NADH + H(+)</text>
        <dbReference type="Rhea" id="RHEA:15133"/>
        <dbReference type="ChEBI" id="CHEBI:15377"/>
        <dbReference type="ChEBI" id="CHEBI:15378"/>
        <dbReference type="ChEBI" id="CHEBI:16810"/>
        <dbReference type="ChEBI" id="CHEBI:28938"/>
        <dbReference type="ChEBI" id="CHEBI:29985"/>
        <dbReference type="ChEBI" id="CHEBI:57540"/>
        <dbReference type="ChEBI" id="CHEBI:57945"/>
        <dbReference type="EC" id="1.4.1.2"/>
    </reaction>
</comment>
<comment type="subunit">
    <text evidence="1">Homohexamer.</text>
</comment>
<comment type="similarity">
    <text evidence="3">Belongs to the Glu/Leu/Phe/Val dehydrogenases family.</text>
</comment>
<accession>Q6GAW8</accession>
<evidence type="ECO:0000250" key="1"/>
<evidence type="ECO:0000255" key="2">
    <source>
        <dbReference type="PROSITE-ProRule" id="PRU10011"/>
    </source>
</evidence>
<evidence type="ECO:0000305" key="3"/>